<protein>
    <recommendedName>
        <fullName evidence="1">4-hydroxy-tetrahydrodipicolinate synthase</fullName>
        <shortName evidence="1">HTPA synthase</shortName>
        <ecNumber evidence="1">4.3.3.7</ecNumber>
    </recommendedName>
</protein>
<evidence type="ECO:0000255" key="1">
    <source>
        <dbReference type="HAMAP-Rule" id="MF_00418"/>
    </source>
</evidence>
<evidence type="ECO:0000305" key="2"/>
<name>DAPA_STRZP</name>
<feature type="chain" id="PRO_1000134882" description="4-hydroxy-tetrahydrodipicolinate synthase">
    <location>
        <begin position="1"/>
        <end position="311"/>
    </location>
</feature>
<feature type="active site" description="Proton donor/acceptor" evidence="1">
    <location>
        <position position="140"/>
    </location>
</feature>
<feature type="active site" description="Schiff-base intermediate with substrate" evidence="1">
    <location>
        <position position="168"/>
    </location>
</feature>
<feature type="binding site" evidence="1">
    <location>
        <position position="51"/>
    </location>
    <ligand>
        <name>pyruvate</name>
        <dbReference type="ChEBI" id="CHEBI:15361"/>
    </ligand>
</feature>
<feature type="binding site" evidence="1">
    <location>
        <position position="209"/>
    </location>
    <ligand>
        <name>pyruvate</name>
        <dbReference type="ChEBI" id="CHEBI:15361"/>
    </ligand>
</feature>
<feature type="site" description="Part of a proton relay during catalysis" evidence="1">
    <location>
        <position position="50"/>
    </location>
</feature>
<feature type="site" description="Part of a proton relay during catalysis" evidence="1">
    <location>
        <position position="114"/>
    </location>
</feature>
<reference key="1">
    <citation type="journal article" date="2010" name="Genome Biol.">
        <title>Structure and dynamics of the pan-genome of Streptococcus pneumoniae and closely related species.</title>
        <authorList>
            <person name="Donati C."/>
            <person name="Hiller N.L."/>
            <person name="Tettelin H."/>
            <person name="Muzzi A."/>
            <person name="Croucher N.J."/>
            <person name="Angiuoli S.V."/>
            <person name="Oggioni M."/>
            <person name="Dunning Hotopp J.C."/>
            <person name="Hu F.Z."/>
            <person name="Riley D.R."/>
            <person name="Covacci A."/>
            <person name="Mitchell T.J."/>
            <person name="Bentley S.D."/>
            <person name="Kilian M."/>
            <person name="Ehrlich G.D."/>
            <person name="Rappuoli R."/>
            <person name="Moxon E.R."/>
            <person name="Masignani V."/>
        </authorList>
    </citation>
    <scope>NUCLEOTIDE SEQUENCE [LARGE SCALE GENOMIC DNA]</scope>
    <source>
        <strain>P1031</strain>
    </source>
</reference>
<dbReference type="EC" id="4.3.3.7" evidence="1"/>
<dbReference type="EMBL" id="CP000920">
    <property type="protein sequence ID" value="ACO21492.1"/>
    <property type="molecule type" value="Genomic_DNA"/>
</dbReference>
<dbReference type="RefSeq" id="WP_000121629.1">
    <property type="nucleotide sequence ID" value="NC_012467.1"/>
</dbReference>
<dbReference type="SMR" id="C1CK93"/>
<dbReference type="GeneID" id="45653647"/>
<dbReference type="KEGG" id="spp:SPP_1021"/>
<dbReference type="HOGENOM" id="CLU_049343_7_1_9"/>
<dbReference type="UniPathway" id="UPA00034">
    <property type="reaction ID" value="UER00017"/>
</dbReference>
<dbReference type="GO" id="GO:0005829">
    <property type="term" value="C:cytosol"/>
    <property type="evidence" value="ECO:0007669"/>
    <property type="project" value="TreeGrafter"/>
</dbReference>
<dbReference type="GO" id="GO:0008840">
    <property type="term" value="F:4-hydroxy-tetrahydrodipicolinate synthase activity"/>
    <property type="evidence" value="ECO:0007669"/>
    <property type="project" value="UniProtKB-UniRule"/>
</dbReference>
<dbReference type="GO" id="GO:0019877">
    <property type="term" value="P:diaminopimelate biosynthetic process"/>
    <property type="evidence" value="ECO:0007669"/>
    <property type="project" value="UniProtKB-UniRule"/>
</dbReference>
<dbReference type="GO" id="GO:0009089">
    <property type="term" value="P:lysine biosynthetic process via diaminopimelate"/>
    <property type="evidence" value="ECO:0007669"/>
    <property type="project" value="UniProtKB-UniRule"/>
</dbReference>
<dbReference type="CDD" id="cd00950">
    <property type="entry name" value="DHDPS"/>
    <property type="match status" value="1"/>
</dbReference>
<dbReference type="Gene3D" id="3.20.20.70">
    <property type="entry name" value="Aldolase class I"/>
    <property type="match status" value="1"/>
</dbReference>
<dbReference type="HAMAP" id="MF_00418">
    <property type="entry name" value="DapA"/>
    <property type="match status" value="1"/>
</dbReference>
<dbReference type="InterPro" id="IPR013785">
    <property type="entry name" value="Aldolase_TIM"/>
</dbReference>
<dbReference type="InterPro" id="IPR005263">
    <property type="entry name" value="DapA"/>
</dbReference>
<dbReference type="InterPro" id="IPR002220">
    <property type="entry name" value="DapA-like"/>
</dbReference>
<dbReference type="InterPro" id="IPR020625">
    <property type="entry name" value="Schiff_base-form_aldolases_AS"/>
</dbReference>
<dbReference type="NCBIfam" id="TIGR00674">
    <property type="entry name" value="dapA"/>
    <property type="match status" value="1"/>
</dbReference>
<dbReference type="PANTHER" id="PTHR12128:SF66">
    <property type="entry name" value="4-HYDROXY-2-OXOGLUTARATE ALDOLASE, MITOCHONDRIAL"/>
    <property type="match status" value="1"/>
</dbReference>
<dbReference type="PANTHER" id="PTHR12128">
    <property type="entry name" value="DIHYDRODIPICOLINATE SYNTHASE"/>
    <property type="match status" value="1"/>
</dbReference>
<dbReference type="Pfam" id="PF00701">
    <property type="entry name" value="DHDPS"/>
    <property type="match status" value="1"/>
</dbReference>
<dbReference type="PIRSF" id="PIRSF001365">
    <property type="entry name" value="DHDPS"/>
    <property type="match status" value="1"/>
</dbReference>
<dbReference type="PRINTS" id="PR00146">
    <property type="entry name" value="DHPICSNTHASE"/>
</dbReference>
<dbReference type="SMART" id="SM01130">
    <property type="entry name" value="DHDPS"/>
    <property type="match status" value="1"/>
</dbReference>
<dbReference type="SUPFAM" id="SSF51569">
    <property type="entry name" value="Aldolase"/>
    <property type="match status" value="1"/>
</dbReference>
<dbReference type="PROSITE" id="PS00666">
    <property type="entry name" value="DHDPS_2"/>
    <property type="match status" value="1"/>
</dbReference>
<accession>C1CK93</accession>
<organism>
    <name type="scientific">Streptococcus pneumoniae (strain P1031)</name>
    <dbReference type="NCBI Taxonomy" id="488223"/>
    <lineage>
        <taxon>Bacteria</taxon>
        <taxon>Bacillati</taxon>
        <taxon>Bacillota</taxon>
        <taxon>Bacilli</taxon>
        <taxon>Lactobacillales</taxon>
        <taxon>Streptococcaceae</taxon>
        <taxon>Streptococcus</taxon>
    </lineage>
</organism>
<comment type="function">
    <text evidence="1">Catalyzes the condensation of (S)-aspartate-beta-semialdehyde [(S)-ASA] and pyruvate to 4-hydroxy-tetrahydrodipicolinate (HTPA).</text>
</comment>
<comment type="catalytic activity">
    <reaction evidence="1">
        <text>L-aspartate 4-semialdehyde + pyruvate = (2S,4S)-4-hydroxy-2,3,4,5-tetrahydrodipicolinate + H2O + H(+)</text>
        <dbReference type="Rhea" id="RHEA:34171"/>
        <dbReference type="ChEBI" id="CHEBI:15361"/>
        <dbReference type="ChEBI" id="CHEBI:15377"/>
        <dbReference type="ChEBI" id="CHEBI:15378"/>
        <dbReference type="ChEBI" id="CHEBI:67139"/>
        <dbReference type="ChEBI" id="CHEBI:537519"/>
        <dbReference type="EC" id="4.3.3.7"/>
    </reaction>
</comment>
<comment type="pathway">
    <text evidence="1">Amino-acid biosynthesis; L-lysine biosynthesis via DAP pathway; (S)-tetrahydrodipicolinate from L-aspartate: step 3/4.</text>
</comment>
<comment type="subunit">
    <text evidence="1">Homotetramer; dimer of dimers.</text>
</comment>
<comment type="subcellular location">
    <subcellularLocation>
        <location evidence="1">Cytoplasm</location>
    </subcellularLocation>
</comment>
<comment type="similarity">
    <text evidence="1">Belongs to the DapA family.</text>
</comment>
<comment type="caution">
    <text evidence="2">Was originally thought to be a dihydrodipicolinate synthase (DHDPS), catalyzing the condensation of (S)-aspartate-beta-semialdehyde [(S)-ASA] and pyruvate to dihydrodipicolinate (DHDP). However, it was shown in E.coli that the product of the enzymatic reaction is not dihydrodipicolinate but in fact (4S)-4-hydroxy-2,3,4,5-tetrahydro-(2S)-dipicolinic acid (HTPA), and that the consecutive dehydration reaction leading to DHDP is not spontaneous but catalyzed by DapB.</text>
</comment>
<keyword id="KW-0028">Amino-acid biosynthesis</keyword>
<keyword id="KW-0963">Cytoplasm</keyword>
<keyword id="KW-0220">Diaminopimelate biosynthesis</keyword>
<keyword id="KW-0456">Lyase</keyword>
<keyword id="KW-0457">Lysine biosynthesis</keyword>
<keyword id="KW-0704">Schiff base</keyword>
<proteinExistence type="inferred from homology"/>
<gene>
    <name evidence="1" type="primary">dapA</name>
    <name type="ordered locus">SPP_1021</name>
</gene>
<sequence length="311" mass="33914">MSYQDLKECKIITAFITPFHEDGSINFDAIPALIEHLLAHHTDGILLAGTTAESPTLTHDEELELFAAVQKVVNGRVPLIAGVGTNDTRDSIEFVKEVAEFGGFAAGLAIVPYYNKPSQEGMYQHFKTIADASDLPIIIYNIPGRVVVELTPETMLRLADHPNIIGVKECTSLANMAYLIEHKPEEFLIYTGEDGDAFHAMNLGADGVISVASHTNGDEMHEMFTAIAESDMKKAAAIQRKFIPKVNALFSYPSPAPVKAILNYMGFEAGPTRLPLVPAPEEDAKRIIKVVVDGDYEATKATVTGVLRPDY</sequence>